<protein>
    <recommendedName>
        <fullName evidence="2">Small ribosomal subunit protein eS12</fullName>
    </recommendedName>
    <alternativeName>
        <fullName>40S ribosomal protein S12</fullName>
    </alternativeName>
</protein>
<comment type="similarity">
    <text evidence="2">Belongs to the eukaryotic ribosomal protein eS12 family.</text>
</comment>
<dbReference type="EMBL" id="Z15031">
    <property type="protein sequence ID" value="CAA78749.1"/>
    <property type="molecule type" value="mRNA"/>
</dbReference>
<dbReference type="PIR" id="A48574">
    <property type="entry name" value="S24781"/>
</dbReference>
<dbReference type="PDB" id="8OVA">
    <property type="method" value="EM"/>
    <property type="resolution" value="2.47 A"/>
    <property type="chains" value="AF=1-144"/>
</dbReference>
<dbReference type="PDBsum" id="8OVA"/>
<dbReference type="EMDB" id="EMD-17208"/>
<dbReference type="SMR" id="Q03253"/>
<dbReference type="GO" id="GO:0005737">
    <property type="term" value="C:cytoplasm"/>
    <property type="evidence" value="ECO:0000314"/>
    <property type="project" value="GeneDB"/>
</dbReference>
<dbReference type="GO" id="GO:1990904">
    <property type="term" value="C:ribonucleoprotein complex"/>
    <property type="evidence" value="ECO:0007669"/>
    <property type="project" value="UniProtKB-KW"/>
</dbReference>
<dbReference type="GO" id="GO:0005840">
    <property type="term" value="C:ribosome"/>
    <property type="evidence" value="ECO:0000314"/>
    <property type="project" value="GeneDB"/>
</dbReference>
<dbReference type="GO" id="GO:0003735">
    <property type="term" value="F:structural constituent of ribosome"/>
    <property type="evidence" value="ECO:0000255"/>
    <property type="project" value="GeneDB"/>
</dbReference>
<dbReference type="GO" id="GO:0010608">
    <property type="term" value="P:post-transcriptional regulation of gene expression"/>
    <property type="evidence" value="ECO:0000314"/>
    <property type="project" value="GeneDB"/>
</dbReference>
<dbReference type="GO" id="GO:0006412">
    <property type="term" value="P:translation"/>
    <property type="evidence" value="ECO:0000255"/>
    <property type="project" value="GeneDB"/>
</dbReference>
<dbReference type="FunFam" id="3.30.1330.30:FF:000033">
    <property type="entry name" value="40S ribosomal protein S12"/>
    <property type="match status" value="1"/>
</dbReference>
<dbReference type="Gene3D" id="3.30.1330.30">
    <property type="match status" value="1"/>
</dbReference>
<dbReference type="InterPro" id="IPR029064">
    <property type="entry name" value="Ribosomal_eL30-like_sf"/>
</dbReference>
<dbReference type="InterPro" id="IPR004038">
    <property type="entry name" value="Ribosomal_eL8/eL30/eS12/Gad45"/>
</dbReference>
<dbReference type="InterPro" id="IPR000530">
    <property type="entry name" value="Ribosomal_eS12"/>
</dbReference>
<dbReference type="InterPro" id="IPR047860">
    <property type="entry name" value="Ribosomal_eS12_CS"/>
</dbReference>
<dbReference type="PANTHER" id="PTHR11843">
    <property type="entry name" value="40S RIBOSOMAL PROTEIN S12"/>
    <property type="match status" value="1"/>
</dbReference>
<dbReference type="Pfam" id="PF01248">
    <property type="entry name" value="Ribosomal_L7Ae"/>
    <property type="match status" value="1"/>
</dbReference>
<dbReference type="PRINTS" id="PR00972">
    <property type="entry name" value="RIBSOMALS12E"/>
</dbReference>
<dbReference type="SUPFAM" id="SSF55315">
    <property type="entry name" value="L30e-like"/>
    <property type="match status" value="1"/>
</dbReference>
<dbReference type="PROSITE" id="PS01189">
    <property type="entry name" value="RIBOSOMAL_S12E"/>
    <property type="match status" value="1"/>
</dbReference>
<feature type="initiator methionine" description="Removed" evidence="1">
    <location>
        <position position="1"/>
    </location>
</feature>
<feature type="chain" id="PRO_0000122332" description="Small ribosomal subunit protein eS12">
    <location>
        <begin position="2"/>
        <end position="144"/>
    </location>
</feature>
<organism>
    <name type="scientific">Trypanosoma brucei brucei</name>
    <dbReference type="NCBI Taxonomy" id="5702"/>
    <lineage>
        <taxon>Eukaryota</taxon>
        <taxon>Discoba</taxon>
        <taxon>Euglenozoa</taxon>
        <taxon>Kinetoplastea</taxon>
        <taxon>Metakinetoplastina</taxon>
        <taxon>Trypanosomatida</taxon>
        <taxon>Trypanosomatidae</taxon>
        <taxon>Trypanosoma</taxon>
    </lineage>
</organism>
<name>RS12_TRYBB</name>
<gene>
    <name type="primary">RPS12</name>
</gene>
<proteinExistence type="evidence at protein level"/>
<sequence length="144" mass="15869">MAEETSLVADKVPEPAVIDAVADAMPDSLEDALRIVLMKARETNGLICGLSEVTRALDRRTAHLCVLADDCEDEEYKKLVTALAKQNNIDLVSMDEREKLAQWAGLTRMAADGSVRKTLKCSCLAVRDFGERTKALDYLLSQLQ</sequence>
<accession>Q03253</accession>
<evidence type="ECO:0000250" key="1"/>
<evidence type="ECO:0000305" key="2"/>
<keyword id="KW-0002">3D-structure</keyword>
<keyword id="KW-0687">Ribonucleoprotein</keyword>
<keyword id="KW-0689">Ribosomal protein</keyword>
<reference key="1">
    <citation type="journal article" date="1993" name="Mol. Biochem. Parasitol.">
        <title>A ribosomal S12-like gene of Trypanosoma brucei.</title>
        <authorList>
            <person name="Marchal C."/>
            <person name="Ismaili N."/>
            <person name="Pays E."/>
        </authorList>
    </citation>
    <scope>NUCLEOTIDE SEQUENCE [MRNA]</scope>
</reference>